<organism>
    <name type="scientific">Psychrobacter arcticus (strain DSM 17307 / VKM B-2377 / 273-4)</name>
    <dbReference type="NCBI Taxonomy" id="259536"/>
    <lineage>
        <taxon>Bacteria</taxon>
        <taxon>Pseudomonadati</taxon>
        <taxon>Pseudomonadota</taxon>
        <taxon>Gammaproteobacteria</taxon>
        <taxon>Moraxellales</taxon>
        <taxon>Moraxellaceae</taxon>
        <taxon>Psychrobacter</taxon>
    </lineage>
</organism>
<accession>Q4FSH2</accession>
<proteinExistence type="inferred from homology"/>
<feature type="chain" id="PRO_0000153426" description="Histidinol-phosphate aminotransferase 1">
    <location>
        <begin position="1"/>
        <end position="380"/>
    </location>
</feature>
<feature type="modified residue" description="N6-(pyridoxal phosphate)lysine" evidence="1">
    <location>
        <position position="235"/>
    </location>
</feature>
<name>HIS81_PSYA2</name>
<protein>
    <recommendedName>
        <fullName evidence="1">Histidinol-phosphate aminotransferase 1</fullName>
        <ecNumber evidence="1">2.6.1.9</ecNumber>
    </recommendedName>
    <alternativeName>
        <fullName evidence="1">Imidazole acetol-phosphate transaminase 1</fullName>
    </alternativeName>
</protein>
<gene>
    <name evidence="1" type="primary">hisC1</name>
    <name type="ordered locus">Psyc_1185</name>
</gene>
<sequence>MQSTQSTESNLLPLVPAYDSILALAPYQTGKPIEELTREYGVSDVVKLASNENPIGCSPHVTLAITEQIGQLSRYPDGNGYYLKQALADFNDVNVDQITLGNGSDDLLDILARSFVGADDAIVYSQYAFVVYSMLAKMQGAMDVEVPAQRFGHDLKAMSQAIENNSNTKIVFIANPNNPTGTQLEHGELREFVASVPSSVLVVLDEAYIEYSPESNNRALLDEFDNVVIVRTFSKAYGLAGLRVGYALSSAAVADLLNRIRQPFNVSRVALAAAAAALADQDFIEKTRLINDEQMHWLEKQFDALGLGFIKSHANFIMVEIAVEMEDTNAAVIYQALLEQGVIVRQLEVYGLYNWLRISVGVAEDNMRLIDTLRSILTDD</sequence>
<evidence type="ECO:0000255" key="1">
    <source>
        <dbReference type="HAMAP-Rule" id="MF_01023"/>
    </source>
</evidence>
<comment type="catalytic activity">
    <reaction evidence="1">
        <text>L-histidinol phosphate + 2-oxoglutarate = 3-(imidazol-4-yl)-2-oxopropyl phosphate + L-glutamate</text>
        <dbReference type="Rhea" id="RHEA:23744"/>
        <dbReference type="ChEBI" id="CHEBI:16810"/>
        <dbReference type="ChEBI" id="CHEBI:29985"/>
        <dbReference type="ChEBI" id="CHEBI:57766"/>
        <dbReference type="ChEBI" id="CHEBI:57980"/>
        <dbReference type="EC" id="2.6.1.9"/>
    </reaction>
</comment>
<comment type="cofactor">
    <cofactor evidence="1">
        <name>pyridoxal 5'-phosphate</name>
        <dbReference type="ChEBI" id="CHEBI:597326"/>
    </cofactor>
</comment>
<comment type="pathway">
    <text evidence="1">Amino-acid biosynthesis; L-histidine biosynthesis; L-histidine from 5-phospho-alpha-D-ribose 1-diphosphate: step 7/9.</text>
</comment>
<comment type="subunit">
    <text evidence="1">Homodimer.</text>
</comment>
<comment type="similarity">
    <text evidence="1">Belongs to the class-II pyridoxal-phosphate-dependent aminotransferase family. Histidinol-phosphate aminotransferase subfamily.</text>
</comment>
<reference key="1">
    <citation type="journal article" date="2010" name="Appl. Environ. Microbiol.">
        <title>The genome sequence of Psychrobacter arcticus 273-4, a psychroactive Siberian permafrost bacterium, reveals mechanisms for adaptation to low-temperature growth.</title>
        <authorList>
            <person name="Ayala-del-Rio H.L."/>
            <person name="Chain P.S."/>
            <person name="Grzymski J.J."/>
            <person name="Ponder M.A."/>
            <person name="Ivanova N."/>
            <person name="Bergholz P.W."/>
            <person name="Di Bartolo G."/>
            <person name="Hauser L."/>
            <person name="Land M."/>
            <person name="Bakermans C."/>
            <person name="Rodrigues D."/>
            <person name="Klappenbach J."/>
            <person name="Zarka D."/>
            <person name="Larimer F."/>
            <person name="Richardson P."/>
            <person name="Murray A."/>
            <person name="Thomashow M."/>
            <person name="Tiedje J.M."/>
        </authorList>
    </citation>
    <scope>NUCLEOTIDE SEQUENCE [LARGE SCALE GENOMIC DNA]</scope>
    <source>
        <strain>DSM 17307 / VKM B-2377 / 273-4</strain>
    </source>
</reference>
<dbReference type="EC" id="2.6.1.9" evidence="1"/>
<dbReference type="EMBL" id="CP000082">
    <property type="protein sequence ID" value="AAZ19036.1"/>
    <property type="molecule type" value="Genomic_DNA"/>
</dbReference>
<dbReference type="RefSeq" id="WP_011280458.1">
    <property type="nucleotide sequence ID" value="NC_007204.1"/>
</dbReference>
<dbReference type="SMR" id="Q4FSH2"/>
<dbReference type="STRING" id="259536.Psyc_1185"/>
<dbReference type="DNASU" id="3514083"/>
<dbReference type="KEGG" id="par:Psyc_1185"/>
<dbReference type="eggNOG" id="COG0079">
    <property type="taxonomic scope" value="Bacteria"/>
</dbReference>
<dbReference type="HOGENOM" id="CLU_017584_3_3_6"/>
<dbReference type="OrthoDB" id="9813612at2"/>
<dbReference type="UniPathway" id="UPA00031">
    <property type="reaction ID" value="UER00012"/>
</dbReference>
<dbReference type="Proteomes" id="UP000000546">
    <property type="component" value="Chromosome"/>
</dbReference>
<dbReference type="GO" id="GO:0004400">
    <property type="term" value="F:histidinol-phosphate transaminase activity"/>
    <property type="evidence" value="ECO:0007669"/>
    <property type="project" value="UniProtKB-UniRule"/>
</dbReference>
<dbReference type="GO" id="GO:0030170">
    <property type="term" value="F:pyridoxal phosphate binding"/>
    <property type="evidence" value="ECO:0007669"/>
    <property type="project" value="InterPro"/>
</dbReference>
<dbReference type="GO" id="GO:0000105">
    <property type="term" value="P:L-histidine biosynthetic process"/>
    <property type="evidence" value="ECO:0007669"/>
    <property type="project" value="UniProtKB-UniRule"/>
</dbReference>
<dbReference type="CDD" id="cd00609">
    <property type="entry name" value="AAT_like"/>
    <property type="match status" value="1"/>
</dbReference>
<dbReference type="Gene3D" id="3.90.1150.10">
    <property type="entry name" value="Aspartate Aminotransferase, domain 1"/>
    <property type="match status" value="1"/>
</dbReference>
<dbReference type="Gene3D" id="3.40.640.10">
    <property type="entry name" value="Type I PLP-dependent aspartate aminotransferase-like (Major domain)"/>
    <property type="match status" value="1"/>
</dbReference>
<dbReference type="HAMAP" id="MF_01023">
    <property type="entry name" value="HisC_aminotrans_2"/>
    <property type="match status" value="1"/>
</dbReference>
<dbReference type="InterPro" id="IPR001917">
    <property type="entry name" value="Aminotrans_II_pyridoxalP_BS"/>
</dbReference>
<dbReference type="InterPro" id="IPR004839">
    <property type="entry name" value="Aminotransferase_I/II_large"/>
</dbReference>
<dbReference type="InterPro" id="IPR005861">
    <property type="entry name" value="HisP_aminotrans"/>
</dbReference>
<dbReference type="InterPro" id="IPR050106">
    <property type="entry name" value="HistidinolP_aminotransfase"/>
</dbReference>
<dbReference type="InterPro" id="IPR015424">
    <property type="entry name" value="PyrdxlP-dep_Trfase"/>
</dbReference>
<dbReference type="InterPro" id="IPR015421">
    <property type="entry name" value="PyrdxlP-dep_Trfase_major"/>
</dbReference>
<dbReference type="InterPro" id="IPR015422">
    <property type="entry name" value="PyrdxlP-dep_Trfase_small"/>
</dbReference>
<dbReference type="NCBIfam" id="TIGR01141">
    <property type="entry name" value="hisC"/>
    <property type="match status" value="1"/>
</dbReference>
<dbReference type="PANTHER" id="PTHR43643:SF3">
    <property type="entry name" value="HISTIDINOL-PHOSPHATE AMINOTRANSFERASE"/>
    <property type="match status" value="1"/>
</dbReference>
<dbReference type="PANTHER" id="PTHR43643">
    <property type="entry name" value="HISTIDINOL-PHOSPHATE AMINOTRANSFERASE 2"/>
    <property type="match status" value="1"/>
</dbReference>
<dbReference type="Pfam" id="PF00155">
    <property type="entry name" value="Aminotran_1_2"/>
    <property type="match status" value="1"/>
</dbReference>
<dbReference type="SUPFAM" id="SSF53383">
    <property type="entry name" value="PLP-dependent transferases"/>
    <property type="match status" value="1"/>
</dbReference>
<dbReference type="PROSITE" id="PS00599">
    <property type="entry name" value="AA_TRANSFER_CLASS_2"/>
    <property type="match status" value="1"/>
</dbReference>
<keyword id="KW-0028">Amino-acid biosynthesis</keyword>
<keyword id="KW-0032">Aminotransferase</keyword>
<keyword id="KW-0368">Histidine biosynthesis</keyword>
<keyword id="KW-0663">Pyridoxal phosphate</keyword>
<keyword id="KW-1185">Reference proteome</keyword>
<keyword id="KW-0808">Transferase</keyword>